<proteinExistence type="inferred from homology"/>
<name>LPXC_CHLCV</name>
<keyword id="KW-0378">Hydrolase</keyword>
<keyword id="KW-0441">Lipid A biosynthesis</keyword>
<keyword id="KW-0444">Lipid biosynthesis</keyword>
<keyword id="KW-0443">Lipid metabolism</keyword>
<keyword id="KW-0479">Metal-binding</keyword>
<keyword id="KW-0862">Zinc</keyword>
<gene>
    <name evidence="1" type="primary">lpxC</name>
    <name type="ordered locus">CCA_00088</name>
</gene>
<organism>
    <name type="scientific">Chlamydia caviae (strain ATCC VR-813 / DSM 19441 / 03DC25 / GPIC)</name>
    <name type="common">Chlamydophila caviae</name>
    <dbReference type="NCBI Taxonomy" id="227941"/>
    <lineage>
        <taxon>Bacteria</taxon>
        <taxon>Pseudomonadati</taxon>
        <taxon>Chlamydiota</taxon>
        <taxon>Chlamydiia</taxon>
        <taxon>Chlamydiales</taxon>
        <taxon>Chlamydiaceae</taxon>
        <taxon>Chlamydia/Chlamydophila group</taxon>
        <taxon>Chlamydia</taxon>
    </lineage>
</organism>
<evidence type="ECO:0000255" key="1">
    <source>
        <dbReference type="HAMAP-Rule" id="MF_00388"/>
    </source>
</evidence>
<evidence type="ECO:0000305" key="2"/>
<protein>
    <recommendedName>
        <fullName evidence="1">UDP-3-O-acyl-N-acetylglucosamine deacetylase</fullName>
        <shortName evidence="1">UDP-3-O-acyl-GlcNAc deacetylase</shortName>
        <ecNumber evidence="1">3.5.1.108</ecNumber>
    </recommendedName>
    <alternativeName>
        <fullName evidence="1">UDP-3-O-[R-3-hydroxymyristoyl]-N-acetylglucosamine deacetylase</fullName>
    </alternativeName>
</protein>
<sequence>MLERAQRTLKREVRYSGVGIHFGKSATLTLEPAKENTGIVFCRSDLLGERIPALLPHVYNTGRSTTLSAGDSVIATVEHLMAALRSSNIDNVIVRCSEEEIPIGDGSSHVFMQLIDDAGICTQNDKVPIARLSQPVYYQSQDTFLAAFPCDELKISYTLHYPQSPTIGTQYRSFVITEESFRKEIAPCRTFALYNELCFLMDRGLIRGGCLENAVVFKDDGVISLGQLRFSDEPVRHKILDLIGDLSLVGRPFVAHIVAVGSGHSSNIALGRKILEVLQP</sequence>
<dbReference type="EC" id="3.5.1.108" evidence="1"/>
<dbReference type="EMBL" id="AE015925">
    <property type="protein sequence ID" value="AAP04840.1"/>
    <property type="status" value="ALT_INIT"/>
    <property type="molecule type" value="Genomic_DNA"/>
</dbReference>
<dbReference type="RefSeq" id="WP_041462191.1">
    <property type="nucleotide sequence ID" value="NC_003361.3"/>
</dbReference>
<dbReference type="SMR" id="Q824Q4"/>
<dbReference type="STRING" id="227941.CCA_00088"/>
<dbReference type="KEGG" id="cca:CCA_00088"/>
<dbReference type="eggNOG" id="COG0774">
    <property type="taxonomic scope" value="Bacteria"/>
</dbReference>
<dbReference type="HOGENOM" id="CLU_046528_1_0_0"/>
<dbReference type="OrthoDB" id="9772788at2"/>
<dbReference type="UniPathway" id="UPA00359">
    <property type="reaction ID" value="UER00478"/>
</dbReference>
<dbReference type="Proteomes" id="UP000002193">
    <property type="component" value="Chromosome"/>
</dbReference>
<dbReference type="GO" id="GO:0016020">
    <property type="term" value="C:membrane"/>
    <property type="evidence" value="ECO:0007669"/>
    <property type="project" value="GOC"/>
</dbReference>
<dbReference type="GO" id="GO:0046872">
    <property type="term" value="F:metal ion binding"/>
    <property type="evidence" value="ECO:0007669"/>
    <property type="project" value="UniProtKB-KW"/>
</dbReference>
<dbReference type="GO" id="GO:0103117">
    <property type="term" value="F:UDP-3-O-acyl-N-acetylglucosamine deacetylase activity"/>
    <property type="evidence" value="ECO:0007669"/>
    <property type="project" value="UniProtKB-UniRule"/>
</dbReference>
<dbReference type="GO" id="GO:0009245">
    <property type="term" value="P:lipid A biosynthetic process"/>
    <property type="evidence" value="ECO:0007669"/>
    <property type="project" value="UniProtKB-UniRule"/>
</dbReference>
<dbReference type="Gene3D" id="3.30.230.20">
    <property type="entry name" value="lpxc deacetylase, domain 1"/>
    <property type="match status" value="1"/>
</dbReference>
<dbReference type="Gene3D" id="3.30.1700.10">
    <property type="entry name" value="lpxc deacetylase, domain 2"/>
    <property type="match status" value="1"/>
</dbReference>
<dbReference type="HAMAP" id="MF_00388">
    <property type="entry name" value="LpxC"/>
    <property type="match status" value="1"/>
</dbReference>
<dbReference type="InterPro" id="IPR020568">
    <property type="entry name" value="Ribosomal_Su5_D2-typ_SF"/>
</dbReference>
<dbReference type="InterPro" id="IPR004463">
    <property type="entry name" value="UDP-acyl_GlcNac_deAcase"/>
</dbReference>
<dbReference type="InterPro" id="IPR011334">
    <property type="entry name" value="UDP-acyl_GlcNac_deAcase_C"/>
</dbReference>
<dbReference type="InterPro" id="IPR015870">
    <property type="entry name" value="UDP-acyl_N-AcGlcN_deAcase_N"/>
</dbReference>
<dbReference type="NCBIfam" id="TIGR00325">
    <property type="entry name" value="lpxC"/>
    <property type="match status" value="1"/>
</dbReference>
<dbReference type="PANTHER" id="PTHR33694">
    <property type="entry name" value="UDP-3-O-ACYL-N-ACETYLGLUCOSAMINE DEACETYLASE 1, MITOCHONDRIAL-RELATED"/>
    <property type="match status" value="1"/>
</dbReference>
<dbReference type="PANTHER" id="PTHR33694:SF1">
    <property type="entry name" value="UDP-3-O-ACYL-N-ACETYLGLUCOSAMINE DEACETYLASE 1, MITOCHONDRIAL-RELATED"/>
    <property type="match status" value="1"/>
</dbReference>
<dbReference type="Pfam" id="PF03331">
    <property type="entry name" value="LpxC"/>
    <property type="match status" value="1"/>
</dbReference>
<dbReference type="SUPFAM" id="SSF54211">
    <property type="entry name" value="Ribosomal protein S5 domain 2-like"/>
    <property type="match status" value="2"/>
</dbReference>
<reference key="1">
    <citation type="journal article" date="2003" name="Nucleic Acids Res.">
        <title>Genome sequence of Chlamydophila caviae (Chlamydia psittaci GPIC): examining the role of niche-specific genes in the evolution of the Chlamydiaceae.</title>
        <authorList>
            <person name="Read T.D."/>
            <person name="Myers G.S.A."/>
            <person name="Brunham R.C."/>
            <person name="Nelson W.C."/>
            <person name="Paulsen I.T."/>
            <person name="Heidelberg J.F."/>
            <person name="Holtzapple E.K."/>
            <person name="Khouri H.M."/>
            <person name="Federova N.B."/>
            <person name="Carty H.A."/>
            <person name="Umayam L.A."/>
            <person name="Haft D.H."/>
            <person name="Peterson J.D."/>
            <person name="Beanan M.J."/>
            <person name="White O."/>
            <person name="Salzberg S.L."/>
            <person name="Hsia R.-C."/>
            <person name="McClarty G."/>
            <person name="Rank R.G."/>
            <person name="Bavoil P.M."/>
            <person name="Fraser C.M."/>
        </authorList>
    </citation>
    <scope>NUCLEOTIDE SEQUENCE [LARGE SCALE GENOMIC DNA]</scope>
    <source>
        <strain>ATCC VR-813 / DSM 19441 / 03DC25 / GPIC</strain>
    </source>
</reference>
<comment type="function">
    <text evidence="1">Catalyzes the hydrolysis of UDP-3-O-myristoyl-N-acetylglucosamine to form UDP-3-O-myristoylglucosamine and acetate, the committed step in lipid A biosynthesis.</text>
</comment>
<comment type="catalytic activity">
    <reaction evidence="1">
        <text>a UDP-3-O-[(3R)-3-hydroxyacyl]-N-acetyl-alpha-D-glucosamine + H2O = a UDP-3-O-[(3R)-3-hydroxyacyl]-alpha-D-glucosamine + acetate</text>
        <dbReference type="Rhea" id="RHEA:67816"/>
        <dbReference type="ChEBI" id="CHEBI:15377"/>
        <dbReference type="ChEBI" id="CHEBI:30089"/>
        <dbReference type="ChEBI" id="CHEBI:137740"/>
        <dbReference type="ChEBI" id="CHEBI:173225"/>
        <dbReference type="EC" id="3.5.1.108"/>
    </reaction>
</comment>
<comment type="cofactor">
    <cofactor evidence="1">
        <name>Zn(2+)</name>
        <dbReference type="ChEBI" id="CHEBI:29105"/>
    </cofactor>
</comment>
<comment type="pathway">
    <text evidence="1">Glycolipid biosynthesis; lipid IV(A) biosynthesis; lipid IV(A) from (3R)-3-hydroxytetradecanoyl-[acyl-carrier-protein] and UDP-N-acetyl-alpha-D-glucosamine: step 2/6.</text>
</comment>
<comment type="similarity">
    <text evidence="1">Belongs to the LpxC family.</text>
</comment>
<comment type="sequence caution" evidence="2">
    <conflict type="erroneous initiation">
        <sequence resource="EMBL-CDS" id="AAP04840"/>
    </conflict>
</comment>
<feature type="chain" id="PRO_0000191924" description="UDP-3-O-acyl-N-acetylglucosamine deacetylase">
    <location>
        <begin position="1"/>
        <end position="280"/>
    </location>
</feature>
<feature type="active site" description="Proton donor" evidence="1">
    <location>
        <position position="264"/>
    </location>
</feature>
<feature type="binding site" evidence="1">
    <location>
        <position position="79"/>
    </location>
    <ligand>
        <name>Zn(2+)</name>
        <dbReference type="ChEBI" id="CHEBI:29105"/>
    </ligand>
</feature>
<feature type="binding site" evidence="1">
    <location>
        <position position="237"/>
    </location>
    <ligand>
        <name>Zn(2+)</name>
        <dbReference type="ChEBI" id="CHEBI:29105"/>
    </ligand>
</feature>
<feature type="binding site" evidence="1">
    <location>
        <position position="241"/>
    </location>
    <ligand>
        <name>Zn(2+)</name>
        <dbReference type="ChEBI" id="CHEBI:29105"/>
    </ligand>
</feature>
<accession>Q824Q4</accession>